<organism>
    <name type="scientific">Mycobacterium leprae (strain TN)</name>
    <dbReference type="NCBI Taxonomy" id="272631"/>
    <lineage>
        <taxon>Bacteria</taxon>
        <taxon>Bacillati</taxon>
        <taxon>Actinomycetota</taxon>
        <taxon>Actinomycetes</taxon>
        <taxon>Mycobacteriales</taxon>
        <taxon>Mycobacteriaceae</taxon>
        <taxon>Mycobacterium</taxon>
    </lineage>
</organism>
<proteinExistence type="inferred from homology"/>
<evidence type="ECO:0000255" key="1">
    <source>
        <dbReference type="HAMAP-Rule" id="MF_01152"/>
    </source>
</evidence>
<evidence type="ECO:0000305" key="2"/>
<keyword id="KW-0143">Chaperone</keyword>
<keyword id="KW-0963">Cytoplasm</keyword>
<keyword id="KW-0235">DNA replication</keyword>
<keyword id="KW-0479">Metal-binding</keyword>
<keyword id="KW-1185">Reference proteome</keyword>
<keyword id="KW-0677">Repeat</keyword>
<keyword id="KW-0346">Stress response</keyword>
<keyword id="KW-0862">Zinc</keyword>
<keyword id="KW-0863">Zinc-finger</keyword>
<name>DNAJ1_MYCLE</name>
<dbReference type="EMBL" id="M95576">
    <property type="protein sequence ID" value="AAA25363.1"/>
    <property type="molecule type" value="Genomic_DNA"/>
</dbReference>
<dbReference type="EMBL" id="AL583925">
    <property type="protein sequence ID" value="CAC32011.1"/>
    <property type="molecule type" value="Genomic_DNA"/>
</dbReference>
<dbReference type="PIR" id="C87221">
    <property type="entry name" value="C87221"/>
</dbReference>
<dbReference type="RefSeq" id="NP_302611.1">
    <property type="nucleotide sequence ID" value="NC_002677.1"/>
</dbReference>
<dbReference type="SMR" id="Q02605"/>
<dbReference type="STRING" id="272631.gene:17576358"/>
<dbReference type="KEGG" id="mle:ML2494"/>
<dbReference type="PATRIC" id="fig|272631.5.peg.4789"/>
<dbReference type="Leproma" id="ML2494"/>
<dbReference type="eggNOG" id="COG0484">
    <property type="taxonomic scope" value="Bacteria"/>
</dbReference>
<dbReference type="HOGENOM" id="CLU_017633_0_6_11"/>
<dbReference type="OrthoDB" id="9779889at2"/>
<dbReference type="Proteomes" id="UP000000806">
    <property type="component" value="Chromosome"/>
</dbReference>
<dbReference type="GO" id="GO:0005737">
    <property type="term" value="C:cytoplasm"/>
    <property type="evidence" value="ECO:0007669"/>
    <property type="project" value="UniProtKB-SubCell"/>
</dbReference>
<dbReference type="GO" id="GO:0005524">
    <property type="term" value="F:ATP binding"/>
    <property type="evidence" value="ECO:0007669"/>
    <property type="project" value="InterPro"/>
</dbReference>
<dbReference type="GO" id="GO:0031072">
    <property type="term" value="F:heat shock protein binding"/>
    <property type="evidence" value="ECO:0007669"/>
    <property type="project" value="InterPro"/>
</dbReference>
<dbReference type="GO" id="GO:0051082">
    <property type="term" value="F:unfolded protein binding"/>
    <property type="evidence" value="ECO:0007669"/>
    <property type="project" value="UniProtKB-UniRule"/>
</dbReference>
<dbReference type="GO" id="GO:0008270">
    <property type="term" value="F:zinc ion binding"/>
    <property type="evidence" value="ECO:0007669"/>
    <property type="project" value="UniProtKB-UniRule"/>
</dbReference>
<dbReference type="GO" id="GO:0051085">
    <property type="term" value="P:chaperone cofactor-dependent protein refolding"/>
    <property type="evidence" value="ECO:0007669"/>
    <property type="project" value="TreeGrafter"/>
</dbReference>
<dbReference type="GO" id="GO:0006260">
    <property type="term" value="P:DNA replication"/>
    <property type="evidence" value="ECO:0007669"/>
    <property type="project" value="UniProtKB-KW"/>
</dbReference>
<dbReference type="GO" id="GO:0042026">
    <property type="term" value="P:protein refolding"/>
    <property type="evidence" value="ECO:0007669"/>
    <property type="project" value="TreeGrafter"/>
</dbReference>
<dbReference type="GO" id="GO:0009408">
    <property type="term" value="P:response to heat"/>
    <property type="evidence" value="ECO:0007669"/>
    <property type="project" value="InterPro"/>
</dbReference>
<dbReference type="CDD" id="cd06257">
    <property type="entry name" value="DnaJ"/>
    <property type="match status" value="1"/>
</dbReference>
<dbReference type="CDD" id="cd10747">
    <property type="entry name" value="DnaJ_C"/>
    <property type="match status" value="1"/>
</dbReference>
<dbReference type="CDD" id="cd10719">
    <property type="entry name" value="DnaJ_zf"/>
    <property type="match status" value="1"/>
</dbReference>
<dbReference type="FunFam" id="2.60.260.20:FF:000021">
    <property type="entry name" value="Chaperone protein DnaJ"/>
    <property type="match status" value="1"/>
</dbReference>
<dbReference type="FunFam" id="2.10.230.10:FF:000002">
    <property type="entry name" value="Molecular chaperone DnaJ"/>
    <property type="match status" value="1"/>
</dbReference>
<dbReference type="Gene3D" id="1.10.287.110">
    <property type="entry name" value="DnaJ domain"/>
    <property type="match status" value="1"/>
</dbReference>
<dbReference type="Gene3D" id="2.10.230.10">
    <property type="entry name" value="Heat shock protein DnaJ, cysteine-rich domain"/>
    <property type="match status" value="1"/>
</dbReference>
<dbReference type="Gene3D" id="2.60.260.20">
    <property type="entry name" value="Urease metallochaperone UreE, N-terminal domain"/>
    <property type="match status" value="2"/>
</dbReference>
<dbReference type="HAMAP" id="MF_01152">
    <property type="entry name" value="DnaJ"/>
    <property type="match status" value="1"/>
</dbReference>
<dbReference type="InterPro" id="IPR012724">
    <property type="entry name" value="DnaJ"/>
</dbReference>
<dbReference type="InterPro" id="IPR002939">
    <property type="entry name" value="DnaJ_C"/>
</dbReference>
<dbReference type="InterPro" id="IPR001623">
    <property type="entry name" value="DnaJ_domain"/>
</dbReference>
<dbReference type="InterPro" id="IPR018253">
    <property type="entry name" value="DnaJ_domain_CS"/>
</dbReference>
<dbReference type="InterPro" id="IPR008971">
    <property type="entry name" value="HSP40/DnaJ_pept-bd"/>
</dbReference>
<dbReference type="InterPro" id="IPR001305">
    <property type="entry name" value="HSP_DnaJ_Cys-rich_dom"/>
</dbReference>
<dbReference type="InterPro" id="IPR036410">
    <property type="entry name" value="HSP_DnaJ_Cys-rich_dom_sf"/>
</dbReference>
<dbReference type="InterPro" id="IPR036869">
    <property type="entry name" value="J_dom_sf"/>
</dbReference>
<dbReference type="NCBIfam" id="TIGR02349">
    <property type="entry name" value="DnaJ_bact"/>
    <property type="match status" value="1"/>
</dbReference>
<dbReference type="NCBIfam" id="NF008035">
    <property type="entry name" value="PRK10767.1"/>
    <property type="match status" value="1"/>
</dbReference>
<dbReference type="NCBIfam" id="NF010872">
    <property type="entry name" value="PRK14279.1"/>
    <property type="match status" value="1"/>
</dbReference>
<dbReference type="PANTHER" id="PTHR43096:SF54">
    <property type="entry name" value="CHAPERONE PROTEIN DNAJ 1"/>
    <property type="match status" value="1"/>
</dbReference>
<dbReference type="PANTHER" id="PTHR43096">
    <property type="entry name" value="DNAJ HOMOLOG 1, MITOCHONDRIAL-RELATED"/>
    <property type="match status" value="1"/>
</dbReference>
<dbReference type="Pfam" id="PF00226">
    <property type="entry name" value="DnaJ"/>
    <property type="match status" value="1"/>
</dbReference>
<dbReference type="Pfam" id="PF01556">
    <property type="entry name" value="DnaJ_C"/>
    <property type="match status" value="1"/>
</dbReference>
<dbReference type="Pfam" id="PF00684">
    <property type="entry name" value="DnaJ_CXXCXGXG"/>
    <property type="match status" value="1"/>
</dbReference>
<dbReference type="PRINTS" id="PR00625">
    <property type="entry name" value="JDOMAIN"/>
</dbReference>
<dbReference type="SMART" id="SM00271">
    <property type="entry name" value="DnaJ"/>
    <property type="match status" value="1"/>
</dbReference>
<dbReference type="SUPFAM" id="SSF46565">
    <property type="entry name" value="Chaperone J-domain"/>
    <property type="match status" value="1"/>
</dbReference>
<dbReference type="SUPFAM" id="SSF57938">
    <property type="entry name" value="DnaJ/Hsp40 cysteine-rich domain"/>
    <property type="match status" value="1"/>
</dbReference>
<dbReference type="SUPFAM" id="SSF49493">
    <property type="entry name" value="HSP40/DnaJ peptide-binding domain"/>
    <property type="match status" value="2"/>
</dbReference>
<dbReference type="PROSITE" id="PS00636">
    <property type="entry name" value="DNAJ_1"/>
    <property type="match status" value="1"/>
</dbReference>
<dbReference type="PROSITE" id="PS50076">
    <property type="entry name" value="DNAJ_2"/>
    <property type="match status" value="1"/>
</dbReference>
<dbReference type="PROSITE" id="PS51188">
    <property type="entry name" value="ZF_CR"/>
    <property type="match status" value="1"/>
</dbReference>
<feature type="chain" id="PRO_0000070826" description="Chaperone protein DnaJ 1">
    <location>
        <begin position="1"/>
        <end position="388"/>
    </location>
</feature>
<feature type="domain" description="J" evidence="1">
    <location>
        <begin position="10"/>
        <end position="74"/>
    </location>
</feature>
<feature type="repeat" description="CXXCXGXG motif">
    <location>
        <begin position="172"/>
        <end position="179"/>
    </location>
</feature>
<feature type="repeat" description="CXXCXGXG motif">
    <location>
        <begin position="189"/>
        <end position="196"/>
    </location>
</feature>
<feature type="repeat" description="CXXCXGXG motif">
    <location>
        <begin position="211"/>
        <end position="218"/>
    </location>
</feature>
<feature type="repeat" description="CXXCXGXG motif">
    <location>
        <begin position="225"/>
        <end position="232"/>
    </location>
</feature>
<feature type="zinc finger region" description="CR-type" evidence="1">
    <location>
        <begin position="159"/>
        <end position="237"/>
    </location>
</feature>
<feature type="binding site" evidence="1">
    <location>
        <position position="172"/>
    </location>
    <ligand>
        <name>Zn(2+)</name>
        <dbReference type="ChEBI" id="CHEBI:29105"/>
        <label>1</label>
    </ligand>
</feature>
<feature type="binding site" evidence="1">
    <location>
        <position position="175"/>
    </location>
    <ligand>
        <name>Zn(2+)</name>
        <dbReference type="ChEBI" id="CHEBI:29105"/>
        <label>1</label>
    </ligand>
</feature>
<feature type="binding site" evidence="1">
    <location>
        <position position="189"/>
    </location>
    <ligand>
        <name>Zn(2+)</name>
        <dbReference type="ChEBI" id="CHEBI:29105"/>
        <label>2</label>
    </ligand>
</feature>
<feature type="binding site" evidence="1">
    <location>
        <position position="192"/>
    </location>
    <ligand>
        <name>Zn(2+)</name>
        <dbReference type="ChEBI" id="CHEBI:29105"/>
        <label>2</label>
    </ligand>
</feature>
<feature type="binding site" evidence="1">
    <location>
        <position position="211"/>
    </location>
    <ligand>
        <name>Zn(2+)</name>
        <dbReference type="ChEBI" id="CHEBI:29105"/>
        <label>2</label>
    </ligand>
</feature>
<feature type="binding site" evidence="1">
    <location>
        <position position="214"/>
    </location>
    <ligand>
        <name>Zn(2+)</name>
        <dbReference type="ChEBI" id="CHEBI:29105"/>
        <label>2</label>
    </ligand>
</feature>
<feature type="binding site" evidence="1">
    <location>
        <position position="225"/>
    </location>
    <ligand>
        <name>Zn(2+)</name>
        <dbReference type="ChEBI" id="CHEBI:29105"/>
        <label>1</label>
    </ligand>
</feature>
<feature type="binding site" evidence="1">
    <location>
        <position position="228"/>
    </location>
    <ligand>
        <name>Zn(2+)</name>
        <dbReference type="ChEBI" id="CHEBI:29105"/>
        <label>1</label>
    </ligand>
</feature>
<feature type="sequence conflict" description="In Ref. 1; AAA25363." evidence="2" ref="1">
    <original>K</original>
    <variation>N</variation>
    <location>
        <position position="27"/>
    </location>
</feature>
<feature type="sequence conflict" description="In Ref. 1; AAA25363." evidence="2" ref="1">
    <original>A</original>
    <variation>S</variation>
    <location>
        <position position="47"/>
    </location>
</feature>
<feature type="sequence conflict" description="In Ref. 1; AAA25363." evidence="2" ref="1">
    <original>W</original>
    <variation>C</variation>
    <location>
        <position position="81"/>
    </location>
</feature>
<feature type="sequence conflict" description="In Ref. 1; AAA25363." evidence="2" ref="1">
    <original>RP</original>
    <variation>S</variation>
    <location>
        <begin position="138"/>
        <end position="139"/>
    </location>
</feature>
<feature type="sequence conflict" description="In Ref. 1; AAA25363." evidence="2" ref="1">
    <original>PC</original>
    <variation>LR</variation>
    <location>
        <begin position="224"/>
        <end position="225"/>
    </location>
</feature>
<feature type="sequence conflict" description="In Ref. 1; AAA25363." evidence="2" ref="1">
    <original>V</original>
    <variation>A</variation>
    <location>
        <position position="350"/>
    </location>
</feature>
<feature type="sequence conflict" description="In Ref. 1; AAA25363." evidence="2" ref="1">
    <original>SSGFNPRAGWG</original>
    <variation>QVVSTLGRDGAGN</variation>
    <location>
        <begin position="377"/>
        <end position="387"/>
    </location>
</feature>
<comment type="function">
    <text evidence="1">Participates actively in the response to hyperosmotic and heat shock by preventing the aggregation of stress-denatured proteins and by disaggregating proteins, also in an autonomous, DnaK-independent fashion. Unfolded proteins bind initially to DnaJ; upon interaction with the DnaJ-bound protein, DnaK hydrolyzes its bound ATP, resulting in the formation of a stable complex. GrpE releases ADP from DnaK; ATP binding to DnaK triggers the release of the substrate protein, thus completing the reaction cycle. Several rounds of ATP-dependent interactions between DnaJ, DnaK and GrpE are required for fully efficient folding. Also involved, together with DnaK and GrpE, in the DNA replication of plasmids through activation of initiation proteins.</text>
</comment>
<comment type="cofactor">
    <cofactor evidence="1">
        <name>Zn(2+)</name>
        <dbReference type="ChEBI" id="CHEBI:29105"/>
    </cofactor>
    <text evidence="1">Binds 2 Zn(2+) ions per monomer.</text>
</comment>
<comment type="subunit">
    <text evidence="1">Homodimer.</text>
</comment>
<comment type="subcellular location">
    <subcellularLocation>
        <location evidence="1">Cytoplasm</location>
    </subcellularLocation>
</comment>
<comment type="domain">
    <text evidence="1">The J domain is necessary and sufficient to stimulate DnaK ATPase activity. Zinc center 1 plays an important role in the autonomous, DnaK-independent chaperone activity of DnaJ. Zinc center 2 is essential for interaction with DnaK and for DnaJ activity.</text>
</comment>
<comment type="similarity">
    <text evidence="1">Belongs to the DnaJ family.</text>
</comment>
<protein>
    <recommendedName>
        <fullName evidence="1">Chaperone protein DnaJ 1</fullName>
    </recommendedName>
</protein>
<sequence length="388" mass="41307">MAQREWVEKDFYKELGVSSDASPEEIKRAYRKLARYLHPDANPDNSAGERFKVVSEAHNVLSDPVKRKEYDETRRLFAGGWLGGRRFDSSFGDFGMGGDGAEFNLNDLFDAASRTGGTNIGDLFGGLFGRGASVRPSRPRRGNDLETEADLDFVEAAKGVAMPLRLTSPAPCTNCHGSGARPGISPKVCSTCNGSGVINRNQGAFGFSEPCTECRGSGSIIEHPCEECKGTGVTTRTRTINVRIPSGVEDGQRIRLAGQGEAGLRGAPSGDLYVTVHVRPDKIFGRNGDDLTVTIPVSFTELALGSTLSVPTLDGTVGVRVPKGTSDGRILRVRGRGVPKRSGGHGDLLVTVKVAVPLNLEGAAQKALEAYAAAERSSGFNPRAGWGR</sequence>
<reference key="1">
    <citation type="journal article" date="1991" name="J. Immunol.">
        <title>Sequence and immunogenicity of the 70-kDa heat shock protein of Mycobacterium leprae.</title>
        <authorList>
            <person name="McKenzie K.R."/>
            <person name="Adams E."/>
            <person name="Britton W.J."/>
            <person name="Garsia R.J."/>
            <person name="Basten A."/>
        </authorList>
    </citation>
    <scope>NUCLEOTIDE SEQUENCE [GENOMIC DNA]</scope>
</reference>
<reference key="2">
    <citation type="journal article" date="2001" name="Nature">
        <title>Massive gene decay in the leprosy bacillus.</title>
        <authorList>
            <person name="Cole S.T."/>
            <person name="Eiglmeier K."/>
            <person name="Parkhill J."/>
            <person name="James K.D."/>
            <person name="Thomson N.R."/>
            <person name="Wheeler P.R."/>
            <person name="Honore N."/>
            <person name="Garnier T."/>
            <person name="Churcher C.M."/>
            <person name="Harris D.E."/>
            <person name="Mungall K.L."/>
            <person name="Basham D."/>
            <person name="Brown D."/>
            <person name="Chillingworth T."/>
            <person name="Connor R."/>
            <person name="Davies R.M."/>
            <person name="Devlin K."/>
            <person name="Duthoy S."/>
            <person name="Feltwell T."/>
            <person name="Fraser A."/>
            <person name="Hamlin N."/>
            <person name="Holroyd S."/>
            <person name="Hornsby T."/>
            <person name="Jagels K."/>
            <person name="Lacroix C."/>
            <person name="Maclean J."/>
            <person name="Moule S."/>
            <person name="Murphy L.D."/>
            <person name="Oliver K."/>
            <person name="Quail M.A."/>
            <person name="Rajandream M.A."/>
            <person name="Rutherford K.M."/>
            <person name="Rutter S."/>
            <person name="Seeger K."/>
            <person name="Simon S."/>
            <person name="Simmonds M."/>
            <person name="Skelton J."/>
            <person name="Squares R."/>
            <person name="Squares S."/>
            <person name="Stevens K."/>
            <person name="Taylor K."/>
            <person name="Whitehead S."/>
            <person name="Woodward J.R."/>
            <person name="Barrell B.G."/>
        </authorList>
    </citation>
    <scope>NUCLEOTIDE SEQUENCE [LARGE SCALE GENOMIC DNA]</scope>
    <source>
        <strain>TN</strain>
    </source>
</reference>
<accession>Q02605</accession>
<gene>
    <name evidence="1" type="primary">dnaJ1</name>
    <name type="ordered locus">ML2494</name>
</gene>